<comment type="function">
    <text evidence="1">One of the primary rRNA binding proteins, it binds directly to 16S rRNA central domain where it helps coordinate assembly of the platform of the 30S subunit.</text>
</comment>
<comment type="subunit">
    <text evidence="1">Part of the 30S ribosomal subunit. Contacts proteins S5 and S12.</text>
</comment>
<comment type="similarity">
    <text evidence="1">Belongs to the universal ribosomal protein uS8 family.</text>
</comment>
<proteinExistence type="inferred from homology"/>
<evidence type="ECO:0000255" key="1">
    <source>
        <dbReference type="HAMAP-Rule" id="MF_01302"/>
    </source>
</evidence>
<evidence type="ECO:0000305" key="2"/>
<feature type="chain" id="PRO_0000411540" description="Small ribosomal subunit protein uS8">
    <location>
        <begin position="1"/>
        <end position="132"/>
    </location>
</feature>
<keyword id="KW-0687">Ribonucleoprotein</keyword>
<keyword id="KW-0689">Ribosomal protein</keyword>
<keyword id="KW-0694">RNA-binding</keyword>
<keyword id="KW-0699">rRNA-binding</keyword>
<sequence>MVMTDPIADFLTRIRNANQVKHEVLEVPASNIKKGIAEILKREGFVKNVEVIEDDKQGIIRVFLKYGKNGERVITNLKRISKPGLRVYAKRDDMPKVLNGLGIAIISTSEGLLTDKEARQKNVGGEVIAYVW</sequence>
<organism>
    <name type="scientific">Streptococcus pyogenes serotype M3 (strain SSI-1)</name>
    <dbReference type="NCBI Taxonomy" id="193567"/>
    <lineage>
        <taxon>Bacteria</taxon>
        <taxon>Bacillati</taxon>
        <taxon>Bacillota</taxon>
        <taxon>Bacilli</taxon>
        <taxon>Lactobacillales</taxon>
        <taxon>Streptococcaceae</taxon>
        <taxon>Streptococcus</taxon>
    </lineage>
</organism>
<reference key="1">
    <citation type="journal article" date="2003" name="Genome Res.">
        <title>Genome sequence of an M3 strain of Streptococcus pyogenes reveals a large-scale genomic rearrangement in invasive strains and new insights into phage evolution.</title>
        <authorList>
            <person name="Nakagawa I."/>
            <person name="Kurokawa K."/>
            <person name="Yamashita A."/>
            <person name="Nakata M."/>
            <person name="Tomiyasu Y."/>
            <person name="Okahashi N."/>
            <person name="Kawabata S."/>
            <person name="Yamazaki K."/>
            <person name="Shiba T."/>
            <person name="Yasunaga T."/>
            <person name="Hayashi H."/>
            <person name="Hattori M."/>
            <person name="Hamada S."/>
        </authorList>
    </citation>
    <scope>NUCLEOTIDE SEQUENCE [LARGE SCALE GENOMIC DNA]</scope>
    <source>
        <strain>SSI-1</strain>
    </source>
</reference>
<name>RS8_STRPQ</name>
<protein>
    <recommendedName>
        <fullName evidence="1">Small ribosomal subunit protein uS8</fullName>
    </recommendedName>
    <alternativeName>
        <fullName evidence="2">30S ribosomal protein S8</fullName>
    </alternativeName>
</protein>
<dbReference type="EMBL" id="BA000034">
    <property type="protein sequence ID" value="BAC63151.1"/>
    <property type="molecule type" value="Genomic_DNA"/>
</dbReference>
<dbReference type="RefSeq" id="WP_002987748.1">
    <property type="nucleotide sequence ID" value="NC_004606.1"/>
</dbReference>
<dbReference type="SMR" id="P0DF01"/>
<dbReference type="GeneID" id="69900040"/>
<dbReference type="KEGG" id="sps:SPs0056"/>
<dbReference type="HOGENOM" id="CLU_098428_0_2_9"/>
<dbReference type="GO" id="GO:1990904">
    <property type="term" value="C:ribonucleoprotein complex"/>
    <property type="evidence" value="ECO:0007669"/>
    <property type="project" value="UniProtKB-KW"/>
</dbReference>
<dbReference type="GO" id="GO:0005840">
    <property type="term" value="C:ribosome"/>
    <property type="evidence" value="ECO:0007669"/>
    <property type="project" value="UniProtKB-KW"/>
</dbReference>
<dbReference type="GO" id="GO:0019843">
    <property type="term" value="F:rRNA binding"/>
    <property type="evidence" value="ECO:0007669"/>
    <property type="project" value="UniProtKB-UniRule"/>
</dbReference>
<dbReference type="GO" id="GO:0003735">
    <property type="term" value="F:structural constituent of ribosome"/>
    <property type="evidence" value="ECO:0007669"/>
    <property type="project" value="InterPro"/>
</dbReference>
<dbReference type="GO" id="GO:0006412">
    <property type="term" value="P:translation"/>
    <property type="evidence" value="ECO:0007669"/>
    <property type="project" value="UniProtKB-UniRule"/>
</dbReference>
<dbReference type="FunFam" id="3.30.1370.30:FF:000002">
    <property type="entry name" value="30S ribosomal protein S8"/>
    <property type="match status" value="1"/>
</dbReference>
<dbReference type="FunFam" id="3.30.1490.10:FF:000001">
    <property type="entry name" value="30S ribosomal protein S8"/>
    <property type="match status" value="1"/>
</dbReference>
<dbReference type="Gene3D" id="3.30.1370.30">
    <property type="match status" value="1"/>
</dbReference>
<dbReference type="Gene3D" id="3.30.1490.10">
    <property type="match status" value="1"/>
</dbReference>
<dbReference type="HAMAP" id="MF_01302_B">
    <property type="entry name" value="Ribosomal_uS8_B"/>
    <property type="match status" value="1"/>
</dbReference>
<dbReference type="InterPro" id="IPR000630">
    <property type="entry name" value="Ribosomal_uS8"/>
</dbReference>
<dbReference type="InterPro" id="IPR047863">
    <property type="entry name" value="Ribosomal_uS8_CS"/>
</dbReference>
<dbReference type="InterPro" id="IPR035987">
    <property type="entry name" value="Ribosomal_uS8_sf"/>
</dbReference>
<dbReference type="NCBIfam" id="NF001109">
    <property type="entry name" value="PRK00136.1"/>
    <property type="match status" value="1"/>
</dbReference>
<dbReference type="PANTHER" id="PTHR11758">
    <property type="entry name" value="40S RIBOSOMAL PROTEIN S15A"/>
    <property type="match status" value="1"/>
</dbReference>
<dbReference type="Pfam" id="PF00410">
    <property type="entry name" value="Ribosomal_S8"/>
    <property type="match status" value="1"/>
</dbReference>
<dbReference type="SUPFAM" id="SSF56047">
    <property type="entry name" value="Ribosomal protein S8"/>
    <property type="match status" value="1"/>
</dbReference>
<dbReference type="PROSITE" id="PS00053">
    <property type="entry name" value="RIBOSOMAL_S8"/>
    <property type="match status" value="1"/>
</dbReference>
<gene>
    <name evidence="1" type="primary">rpsH</name>
    <name type="ordered locus">SPs0056</name>
</gene>
<accession>P0DF01</accession>
<accession>P66635</accession>
<accession>Q9A1W0</accession>